<keyword id="KW-0134">Cell wall</keyword>
<keyword id="KW-0903">Direct protein sequencing</keyword>
<keyword id="KW-0378">Hydrolase</keyword>
<keyword id="KW-1185">Reference proteome</keyword>
<keyword id="KW-0964">Secreted</keyword>
<keyword id="KW-0719">Serine esterase</keyword>
<keyword id="KW-0346">Stress response</keyword>
<evidence type="ECO:0000250" key="1">
    <source>
        <dbReference type="UniProtKB" id="Q5NUF3"/>
    </source>
</evidence>
<evidence type="ECO:0000269" key="2">
    <source>
    </source>
</evidence>
<evidence type="ECO:0000269" key="3">
    <source>
    </source>
</evidence>
<evidence type="ECO:0000269" key="4">
    <source>
    </source>
</evidence>
<evidence type="ECO:0000269" key="5">
    <source>
    </source>
</evidence>
<evidence type="ECO:0000303" key="6">
    <source>
    </source>
</evidence>
<evidence type="ECO:0000303" key="7">
    <source>
    </source>
</evidence>
<evidence type="ECO:0000305" key="8"/>
<evidence type="ECO:0000305" key="9">
    <source>
    </source>
</evidence>
<evidence type="ECO:0000305" key="10">
    <source>
    </source>
</evidence>
<organism>
    <name type="scientific">Mycobacterium tuberculosis (strain ATCC 25618 / H37Rv)</name>
    <dbReference type="NCBI Taxonomy" id="83332"/>
    <lineage>
        <taxon>Bacteria</taxon>
        <taxon>Bacillati</taxon>
        <taxon>Actinomycetota</taxon>
        <taxon>Actinomycetes</taxon>
        <taxon>Mycobacteriales</taxon>
        <taxon>Mycobacteriaceae</taxon>
        <taxon>Mycobacterium</taxon>
        <taxon>Mycobacterium tuberculosis complex</taxon>
    </lineage>
</organism>
<accession>O06350</accession>
<accession>F2GJ51</accession>
<accession>L0TCW1</accession>
<name>LIPF_MYCTU</name>
<gene>
    <name type="primary">lipF</name>
    <name type="ordered locus">Rv3487c</name>
</gene>
<proteinExistence type="evidence at protein level"/>
<sequence length="373" mass="39611">MSSYYARRPLQSSGCSNSDSCWDGAPIEITESGPSVAGRLAALASRMTIKPLMTVGSYLSPLPLPLGFVDFACRVWRPGQGTVRTTINLPNATAQLVRAPGVRAADGAGRVVLYLHGGAFVMCGPNSHSRIVNALSGFAESPVLIVDYRLIPKHSLGMALDDCHDAYQWLRARGYRPEQIVLAGDSAGGYLALALAQRLQCDDEKPAAIVAISPLLQLAKGPKQDHPNIGTDAMFPARAFDALAAWVRAAAAKNMVDGRPEDLYEPLDHIESSLPPTLIHVSGSEVLLHDAQLGAGKLAAAGVCAEVRVWPGQAHLFQLATPLVPEATRSLRQIGQFIRDATADSSLSPVHRSRYVAGSPRAASRGAFGQSPI</sequence>
<dbReference type="EC" id="3.1.1.1" evidence="3"/>
<dbReference type="EC" id="3.1.4.3" evidence="4"/>
<dbReference type="EMBL" id="AL123456">
    <property type="protein sequence ID" value="CCP46309.1"/>
    <property type="status" value="ALT_INIT"/>
    <property type="molecule type" value="Genomic_DNA"/>
</dbReference>
<dbReference type="PIR" id="D70569">
    <property type="entry name" value="D70569"/>
</dbReference>
<dbReference type="RefSeq" id="NP_218004.3">
    <property type="nucleotide sequence ID" value="NC_000962.3"/>
</dbReference>
<dbReference type="RefSeq" id="WP_003418946.1">
    <property type="nucleotide sequence ID" value="NC_000962.3"/>
</dbReference>
<dbReference type="SMR" id="O06350"/>
<dbReference type="STRING" id="83332.Rv3487c"/>
<dbReference type="ESTHER" id="myctu-Rv3487c">
    <property type="family name" value="Hormone-sensitive_lipase_like"/>
</dbReference>
<dbReference type="PaxDb" id="83332-Rv3487c"/>
<dbReference type="GeneID" id="888430"/>
<dbReference type="KEGG" id="mtu:Rv3487c"/>
<dbReference type="TubercuList" id="Rv3487c"/>
<dbReference type="eggNOG" id="COG0657">
    <property type="taxonomic scope" value="Bacteria"/>
</dbReference>
<dbReference type="InParanoid" id="O06350"/>
<dbReference type="OrthoDB" id="128186at2"/>
<dbReference type="PhylomeDB" id="O06350"/>
<dbReference type="BRENDA" id="3.1.4.3">
    <property type="organism ID" value="3445"/>
</dbReference>
<dbReference type="Proteomes" id="UP000001584">
    <property type="component" value="Chromosome"/>
</dbReference>
<dbReference type="GO" id="GO:0005576">
    <property type="term" value="C:extracellular region"/>
    <property type="evidence" value="ECO:0007669"/>
    <property type="project" value="UniProtKB-KW"/>
</dbReference>
<dbReference type="GO" id="GO:0106435">
    <property type="term" value="F:carboxylesterase activity"/>
    <property type="evidence" value="ECO:0007669"/>
    <property type="project" value="UniProtKB-EC"/>
</dbReference>
<dbReference type="GO" id="GO:0034480">
    <property type="term" value="F:phosphatidylcholine phospholipase C activity"/>
    <property type="evidence" value="ECO:0007669"/>
    <property type="project" value="RHEA"/>
</dbReference>
<dbReference type="GO" id="GO:0004629">
    <property type="term" value="F:phospholipase C activity"/>
    <property type="evidence" value="ECO:0000314"/>
    <property type="project" value="MTBBASE"/>
</dbReference>
<dbReference type="GO" id="GO:0004806">
    <property type="term" value="F:triacylglycerol lipase activity"/>
    <property type="evidence" value="ECO:0000314"/>
    <property type="project" value="UniProtKB"/>
</dbReference>
<dbReference type="FunFam" id="3.40.50.1820:FF:000278">
    <property type="entry name" value="Esterase LipF"/>
    <property type="match status" value="1"/>
</dbReference>
<dbReference type="Gene3D" id="3.40.50.1820">
    <property type="entry name" value="alpha/beta hydrolase"/>
    <property type="match status" value="1"/>
</dbReference>
<dbReference type="InterPro" id="IPR013094">
    <property type="entry name" value="AB_hydrolase_3"/>
</dbReference>
<dbReference type="InterPro" id="IPR029058">
    <property type="entry name" value="AB_hydrolase_fold"/>
</dbReference>
<dbReference type="InterPro" id="IPR050300">
    <property type="entry name" value="GDXG_lipolytic_enzyme"/>
</dbReference>
<dbReference type="InterPro" id="IPR033140">
    <property type="entry name" value="Lipase_GDXG_put_SER_AS"/>
</dbReference>
<dbReference type="PANTHER" id="PTHR48081">
    <property type="entry name" value="AB HYDROLASE SUPERFAMILY PROTEIN C4A8.06C"/>
    <property type="match status" value="1"/>
</dbReference>
<dbReference type="PANTHER" id="PTHR48081:SF30">
    <property type="entry name" value="ACETYL-HYDROLASE LIPR-RELATED"/>
    <property type="match status" value="1"/>
</dbReference>
<dbReference type="Pfam" id="PF07859">
    <property type="entry name" value="Abhydrolase_3"/>
    <property type="match status" value="1"/>
</dbReference>
<dbReference type="SUPFAM" id="SSF53474">
    <property type="entry name" value="alpha/beta-Hydrolases"/>
    <property type="match status" value="1"/>
</dbReference>
<dbReference type="PROSITE" id="PS01174">
    <property type="entry name" value="LIPASE_GDXG_SER"/>
    <property type="match status" value="1"/>
</dbReference>
<comment type="function">
    <text evidence="3 4">Hydrolyzes short-chain esters. Shows maximal activity with triacetin and p-nitrophenyl acetate. Has no enzyme activity on triacylglycerides or p-nitrophenyl esters (p-NP) with long fatty acids (tricaprin, p-NP caprylate, or p-NP caprate); experiments performed with enzyme missing the first 97 residues (PubMed:15939293). Has phospholipase C activity, making 1,2-DAG phosphocholine; experiments performed with enzyme missing the first 97 residues (PubMed:18535356).</text>
</comment>
<comment type="catalytic activity">
    <reaction evidence="3">
        <text>a carboxylic ester + H2O = an alcohol + a carboxylate + H(+)</text>
        <dbReference type="Rhea" id="RHEA:21164"/>
        <dbReference type="ChEBI" id="CHEBI:15377"/>
        <dbReference type="ChEBI" id="CHEBI:15378"/>
        <dbReference type="ChEBI" id="CHEBI:29067"/>
        <dbReference type="ChEBI" id="CHEBI:30879"/>
        <dbReference type="ChEBI" id="CHEBI:33308"/>
        <dbReference type="EC" id="3.1.1.1"/>
    </reaction>
</comment>
<comment type="catalytic activity">
    <reaction evidence="4">
        <text>a 1,2-diacyl-sn-glycero-3-phosphocholine + H2O = phosphocholine + a 1,2-diacyl-sn-glycerol + H(+)</text>
        <dbReference type="Rhea" id="RHEA:10604"/>
        <dbReference type="ChEBI" id="CHEBI:15377"/>
        <dbReference type="ChEBI" id="CHEBI:15378"/>
        <dbReference type="ChEBI" id="CHEBI:17815"/>
        <dbReference type="ChEBI" id="CHEBI:57643"/>
        <dbReference type="ChEBI" id="CHEBI:295975"/>
        <dbReference type="EC" id="3.1.4.3"/>
    </reaction>
    <physiologicalReaction direction="left-to-right" evidence="4">
        <dbReference type="Rhea" id="RHEA:10605"/>
    </physiologicalReaction>
</comment>
<comment type="biophysicochemical properties">
    <kinetics>
        <KM evidence="3">0.13 mM for triacetin</KM>
        <KM evidence="3">0.24 mM for tributyrin</KM>
        <KM evidence="3">0.25 mM for tricaproin</KM>
        <KM evidence="3">1.46 mM for tricaprylin</KM>
        <KM evidence="3">0.16 mM for p-nitrophenyl acetate</KM>
        <KM evidence="3">0.18 mM for p-nitrophenyl butyrate</KM>
        <KM evidence="3">0.58 mM for p-nitrophenyl caproate</KM>
        <text evidence="3">kcat is 581.2 sec(-1) for triacetin. kcat is 223.7 sec(-1) for tributyrin. kcat is 122.9 sec(-1) for tricaproin. kcat is 15.6 sec(-1) for tricaprylin. kcat is 501.8 sec(-1) for p-nitrophenyl acetate. kcat is 119.7 sec(-1) for p-nitrophenyl butyrate. kcat is 33.1 sec(-1) for p-nitrophenyl caproate.</text>
    </kinetics>
    <phDependence>
        <text evidence="3">Optimum pH is 7.5.</text>
    </phDependence>
    <temperatureDependence>
        <text evidence="3">Optimum temperature is 35 degrees Celsius.</text>
    </temperatureDependence>
</comment>
<comment type="subcellular location">
    <subcellularLocation>
        <location evidence="10">Secreted</location>
        <location evidence="10">Cell wall</location>
    </subcellularLocation>
    <text evidence="4">Detected by antibodies in a wild-type strain and upon expression of a probably truncated form in M.smegmatis.</text>
</comment>
<comment type="induction">
    <text evidence="3">Induced by acidic pH.</text>
</comment>
<comment type="disruption phenotype">
    <text evidence="2">Mutants show reduced ability to grow in a mouse lung.</text>
</comment>
<comment type="similarity">
    <text evidence="8">Belongs to the 'GDXG' lipolytic enzyme family.</text>
</comment>
<comment type="caution">
    <text evidence="3 4 8">Experiments to characterize enzymatic activity in (PubMed:21969609) and (PubMed:10564470) were performed with protein overexpressed in E.coli or M.smegmatis respectively; both papers use a protein that starts on Val-97 (PubMed:15939293, PubMed:18535356). Three start sites have been proposed for this protein, Met-1, Met-47 and Val-97, this is the longest translation. There is protein sequence that suggests Met-1 is the correct start. Antibodies detect a protein larger than 38 kDa in M.tuberculosis (PubMed:18535356).</text>
</comment>
<comment type="sequence caution" evidence="5">
    <conflict type="erroneous initiation">
        <sequence resource="EMBL-CDS" id="CCP46309"/>
    </conflict>
    <text>Truncated N-terminus.</text>
</comment>
<reference key="1">
    <citation type="journal article" date="1998" name="Nature">
        <title>Deciphering the biology of Mycobacterium tuberculosis from the complete genome sequence.</title>
        <authorList>
            <person name="Cole S.T."/>
            <person name="Brosch R."/>
            <person name="Parkhill J."/>
            <person name="Garnier T."/>
            <person name="Churcher C.M."/>
            <person name="Harris D.E."/>
            <person name="Gordon S.V."/>
            <person name="Eiglmeier K."/>
            <person name="Gas S."/>
            <person name="Barry C.E. III"/>
            <person name="Tekaia F."/>
            <person name="Badcock K."/>
            <person name="Basham D."/>
            <person name="Brown D."/>
            <person name="Chillingworth T."/>
            <person name="Connor R."/>
            <person name="Davies R.M."/>
            <person name="Devlin K."/>
            <person name="Feltwell T."/>
            <person name="Gentles S."/>
            <person name="Hamlin N."/>
            <person name="Holroyd S."/>
            <person name="Hornsby T."/>
            <person name="Jagels K."/>
            <person name="Krogh A."/>
            <person name="McLean J."/>
            <person name="Moule S."/>
            <person name="Murphy L.D."/>
            <person name="Oliver S."/>
            <person name="Osborne J."/>
            <person name="Quail M.A."/>
            <person name="Rajandream M.A."/>
            <person name="Rogers J."/>
            <person name="Rutter S."/>
            <person name="Seeger K."/>
            <person name="Skelton S."/>
            <person name="Squares S."/>
            <person name="Squares R."/>
            <person name="Sulston J.E."/>
            <person name="Taylor K."/>
            <person name="Whitehead S."/>
            <person name="Barrell B.G."/>
        </authorList>
    </citation>
    <scope>NUCLEOTIDE SEQUENCE [LARGE SCALE GENOMIC DNA]</scope>
    <source>
        <strain>ATCC 25618 / H37Rv</strain>
    </source>
</reference>
<reference key="2">
    <citation type="journal article" date="2022" name="Genomics">
        <title>Deep N-terminomics of Mycobacterium tuberculosis H37Rv extensively correct annotated encoding genes.</title>
        <authorList>
            <person name="Shi J."/>
            <person name="Meng S."/>
            <person name="Wan L."/>
            <person name="Zhang Z."/>
            <person name="Jiang S."/>
            <person name="Zhu H."/>
            <person name="Dai E."/>
            <person name="Chang L."/>
            <person name="Gao H."/>
            <person name="Wan K."/>
            <person name="Zhang L."/>
            <person name="Zhao X."/>
            <person name="Liu H."/>
            <person name="Lyu Z."/>
            <person name="Zhang Y."/>
            <person name="Xu P."/>
        </authorList>
    </citation>
    <scope>PROTEIN SEQUENCE OF 8-39 AND 85-98</scope>
    <scope>SEQUENCE REVISION TO N-TERMINUS</scope>
    <source>
        <strain>H37Rv</strain>
    </source>
</reference>
<reference key="3">
    <citation type="journal article" date="2011" name="Mol. Cell. Proteomics">
        <title>Proteogenomic analysis of Mycobacterium tuberculosis by high resolution mass spectrometry.</title>
        <authorList>
            <person name="Kelkar D.S."/>
            <person name="Kumar D."/>
            <person name="Kumar P."/>
            <person name="Balakrishnan L."/>
            <person name="Muthusamy B."/>
            <person name="Yadav A.K."/>
            <person name="Shrivastava P."/>
            <person name="Marimuthu A."/>
            <person name="Anand S."/>
            <person name="Sundaram H."/>
            <person name="Kingsbury R."/>
            <person name="Harsha H.C."/>
            <person name="Nair B."/>
            <person name="Prasad T.S."/>
            <person name="Chauhan D.S."/>
            <person name="Katoch K."/>
            <person name="Katoch V.M."/>
            <person name="Kumar P."/>
            <person name="Chaerkady R."/>
            <person name="Ramachandran S."/>
            <person name="Dash D."/>
            <person name="Pandey A."/>
        </authorList>
    </citation>
    <scope>PROTEIN SEQUENCE OF 85-98</scope>
    <scope>IDENTIFICATION BY MASS SPECTROMETRY [LARGE SCALE ANALYSIS]</scope>
    <source>
        <strain>ATCC 25618 / H37Rv</strain>
    </source>
</reference>
<reference key="4">
    <citation type="journal article" date="1999" name="Mol. Microbiol.">
        <title>Identification of a virulence gene cluster of Mycobacterium tuberculosis by signature-tagged transposon mutagenesis.</title>
        <authorList>
            <person name="Camacho L.R."/>
            <person name="Ensergueix D."/>
            <person name="Perez E."/>
            <person name="Gicquel B."/>
            <person name="Guilhot C."/>
        </authorList>
    </citation>
    <scope>DISRUPTION PHENOTYPE</scope>
    <source>
        <strain>Mt103</strain>
    </source>
</reference>
<reference key="5">
    <citation type="journal article" date="2005" name="Protein Expr. Purif.">
        <title>Expression and characterization of the carboxyl esterase Rv3487c from Mycobacterium tuberculosis.</title>
        <authorList>
            <person name="Zhang M."/>
            <person name="Wang J.D."/>
            <person name="Li Z.F."/>
            <person name="Xie J."/>
            <person name="Yang Y.P."/>
            <person name="Zhong Y."/>
            <person name="Wang H.H."/>
        </authorList>
    </citation>
    <scope>FUNCTION AS A CARBOXYLESTERASE</scope>
    <scope>CATALYTIC ACTIVITY</scope>
    <scope>BIOPHYSICOCHEMICAL PROPERTIES</scope>
    <scope>INDUCTION</scope>
    <scope>MUTAGENESIS OF SER-186; GLU-285 AND HIS-315</scope>
    <source>
        <strain>ATCC 25618 / H37Rv</strain>
    </source>
</reference>
<reference key="6">
    <citation type="journal article" date="2008" name="J. Biosci.">
        <title>Functional characterization of the phospholipase C activity of Rv3487c and its localization on the cell wall of Mycobacterium tuberculosis.</title>
        <authorList>
            <person name="Srinivas M."/>
            <person name="Rajakumari S."/>
            <person name="Narayana Y."/>
            <person name="Joshi B."/>
            <person name="Katoch V.M."/>
            <person name="Rajasekharan R."/>
            <person name="Balaji K.N."/>
        </authorList>
    </citation>
    <scope>FUNCTION AS A PHOSPHOLIPASE</scope>
    <scope>CATALYTIC ACTIVITY</scope>
    <scope>POSSIBLE SUBCELLULAR LOCATION</scope>
</reference>
<protein>
    <recommendedName>
        <fullName evidence="6 7">Carboxylesterase/phospholipase LipF</fullName>
        <ecNumber evidence="3">3.1.1.1</ecNumber>
        <ecNumber evidence="4">3.1.4.3</ecNumber>
    </recommendedName>
</protein>
<feature type="propeptide" id="PRO_0000455443" evidence="5">
    <location>
        <begin position="1"/>
        <end position="7"/>
    </location>
</feature>
<feature type="chain" id="PRO_0000419168" description="Carboxylesterase/phospholipase LipF">
    <location>
        <begin position="8"/>
        <end position="373"/>
    </location>
</feature>
<feature type="short sequence motif" description="Involved in the stabilization of the negatively charged intermediate by the formation of the oxyanion hole" evidence="1">
    <location>
        <begin position="116"/>
        <end position="118"/>
    </location>
</feature>
<feature type="active site" evidence="9">
    <location>
        <position position="186"/>
    </location>
</feature>
<feature type="active site" evidence="9">
    <location>
        <position position="285"/>
    </location>
</feature>
<feature type="active site" evidence="9">
    <location>
        <position position="315"/>
    </location>
</feature>
<feature type="mutagenesis site" description="Loss of activity." evidence="3">
    <original>S</original>
    <variation>A</variation>
    <location>
        <position position="186"/>
    </location>
</feature>
<feature type="mutagenesis site" description="Loss of activity." evidence="3">
    <original>E</original>
    <variation>A</variation>
    <location>
        <position position="285"/>
    </location>
</feature>
<feature type="mutagenesis site" description="Loss of activity." evidence="3">
    <original>H</original>
    <variation>A</variation>
    <location>
        <position position="315"/>
    </location>
</feature>